<feature type="chain" id="PRO_1000084649" description="tRNA pseudouridine synthase B">
    <location>
        <begin position="1"/>
        <end position="305"/>
    </location>
</feature>
<feature type="active site" description="Nucleophile" evidence="1">
    <location>
        <position position="48"/>
    </location>
</feature>
<organism>
    <name type="scientific">Pseudomonas putida (strain GB-1)</name>
    <dbReference type="NCBI Taxonomy" id="76869"/>
    <lineage>
        <taxon>Bacteria</taxon>
        <taxon>Pseudomonadati</taxon>
        <taxon>Pseudomonadota</taxon>
        <taxon>Gammaproteobacteria</taxon>
        <taxon>Pseudomonadales</taxon>
        <taxon>Pseudomonadaceae</taxon>
        <taxon>Pseudomonas</taxon>
    </lineage>
</organism>
<sequence>MAQVKRIRRNVSGIILLDKPLGFTSNAALQKVRWLLNAEKAGHTGSLDPLATGVLPLCFGEATKFSQYLLDSDKGYETVMQMGQTTNTGDAEGEVLQTRDVTVGRADIEALLPRFRGPISQIPPMYSALKRDGQPLYKLARAGEVVEREARSVTINRLELLECEGTRARLSVGCSKGTYIRTLVEDIGEALGCGAYVAELRRTQAGPFALAQTVTLEELEQAHADGGNEALDRFLMPSDSGLQDWPMVSLSEHSAFYWLHGQAVRAPDAPQFGMVRVQDHNARFIGIGEVSEDGRIAPRRLIRSE</sequence>
<comment type="function">
    <text evidence="1">Responsible for synthesis of pseudouridine from uracil-55 in the psi GC loop of transfer RNAs.</text>
</comment>
<comment type="catalytic activity">
    <reaction evidence="1">
        <text>uridine(55) in tRNA = pseudouridine(55) in tRNA</text>
        <dbReference type="Rhea" id="RHEA:42532"/>
        <dbReference type="Rhea" id="RHEA-COMP:10101"/>
        <dbReference type="Rhea" id="RHEA-COMP:10102"/>
        <dbReference type="ChEBI" id="CHEBI:65314"/>
        <dbReference type="ChEBI" id="CHEBI:65315"/>
        <dbReference type="EC" id="5.4.99.25"/>
    </reaction>
</comment>
<comment type="similarity">
    <text evidence="1">Belongs to the pseudouridine synthase TruB family. Type 1 subfamily.</text>
</comment>
<keyword id="KW-0413">Isomerase</keyword>
<keyword id="KW-0819">tRNA processing</keyword>
<proteinExistence type="inferred from homology"/>
<reference key="1">
    <citation type="submission" date="2008-01" db="EMBL/GenBank/DDBJ databases">
        <title>Complete sequence of Pseudomonas putida GB-1.</title>
        <authorList>
            <consortium name="US DOE Joint Genome Institute"/>
            <person name="Copeland A."/>
            <person name="Lucas S."/>
            <person name="Lapidus A."/>
            <person name="Barry K."/>
            <person name="Glavina del Rio T."/>
            <person name="Dalin E."/>
            <person name="Tice H."/>
            <person name="Pitluck S."/>
            <person name="Bruce D."/>
            <person name="Goodwin L."/>
            <person name="Chertkov O."/>
            <person name="Brettin T."/>
            <person name="Detter J.C."/>
            <person name="Han C."/>
            <person name="Kuske C.R."/>
            <person name="Schmutz J."/>
            <person name="Larimer F."/>
            <person name="Land M."/>
            <person name="Hauser L."/>
            <person name="Kyrpides N."/>
            <person name="Kim E."/>
            <person name="McCarthy J.K."/>
            <person name="Richardson P."/>
        </authorList>
    </citation>
    <scope>NUCLEOTIDE SEQUENCE [LARGE SCALE GENOMIC DNA]</scope>
    <source>
        <strain>GB-1</strain>
    </source>
</reference>
<name>TRUB_PSEPG</name>
<dbReference type="EC" id="5.4.99.25" evidence="1"/>
<dbReference type="EMBL" id="CP000926">
    <property type="protein sequence ID" value="ABZ00597.1"/>
    <property type="molecule type" value="Genomic_DNA"/>
</dbReference>
<dbReference type="RefSeq" id="WP_012274242.1">
    <property type="nucleotide sequence ID" value="NC_010322.1"/>
</dbReference>
<dbReference type="SMR" id="B0KHX6"/>
<dbReference type="KEGG" id="ppg:PputGB1_4710"/>
<dbReference type="eggNOG" id="COG0130">
    <property type="taxonomic scope" value="Bacteria"/>
</dbReference>
<dbReference type="HOGENOM" id="CLU_032087_0_3_6"/>
<dbReference type="Proteomes" id="UP000002157">
    <property type="component" value="Chromosome"/>
</dbReference>
<dbReference type="GO" id="GO:0003723">
    <property type="term" value="F:RNA binding"/>
    <property type="evidence" value="ECO:0007669"/>
    <property type="project" value="InterPro"/>
</dbReference>
<dbReference type="GO" id="GO:0160148">
    <property type="term" value="F:tRNA pseudouridine(55) synthase activity"/>
    <property type="evidence" value="ECO:0007669"/>
    <property type="project" value="UniProtKB-EC"/>
</dbReference>
<dbReference type="GO" id="GO:1990481">
    <property type="term" value="P:mRNA pseudouridine synthesis"/>
    <property type="evidence" value="ECO:0007669"/>
    <property type="project" value="TreeGrafter"/>
</dbReference>
<dbReference type="GO" id="GO:0031119">
    <property type="term" value="P:tRNA pseudouridine synthesis"/>
    <property type="evidence" value="ECO:0007669"/>
    <property type="project" value="UniProtKB-UniRule"/>
</dbReference>
<dbReference type="CDD" id="cd02573">
    <property type="entry name" value="PseudoU_synth_EcTruB"/>
    <property type="match status" value="1"/>
</dbReference>
<dbReference type="CDD" id="cd21152">
    <property type="entry name" value="PUA_TruB_bacterial"/>
    <property type="match status" value="1"/>
</dbReference>
<dbReference type="FunFam" id="2.30.130.10:FF:000012">
    <property type="entry name" value="tRNA pseudouridine synthase B"/>
    <property type="match status" value="1"/>
</dbReference>
<dbReference type="FunFam" id="3.30.2350.10:FF:000011">
    <property type="entry name" value="tRNA pseudouridine synthase B"/>
    <property type="match status" value="1"/>
</dbReference>
<dbReference type="Gene3D" id="3.30.2350.10">
    <property type="entry name" value="Pseudouridine synthase"/>
    <property type="match status" value="1"/>
</dbReference>
<dbReference type="Gene3D" id="2.30.130.10">
    <property type="entry name" value="PUA domain"/>
    <property type="match status" value="1"/>
</dbReference>
<dbReference type="HAMAP" id="MF_01080">
    <property type="entry name" value="TruB_bact"/>
    <property type="match status" value="1"/>
</dbReference>
<dbReference type="InterPro" id="IPR020103">
    <property type="entry name" value="PsdUridine_synth_cat_dom_sf"/>
</dbReference>
<dbReference type="InterPro" id="IPR002501">
    <property type="entry name" value="PsdUridine_synth_N"/>
</dbReference>
<dbReference type="InterPro" id="IPR015947">
    <property type="entry name" value="PUA-like_sf"/>
</dbReference>
<dbReference type="InterPro" id="IPR036974">
    <property type="entry name" value="PUA_sf"/>
</dbReference>
<dbReference type="InterPro" id="IPR014780">
    <property type="entry name" value="tRNA_psdUridine_synth_TruB"/>
</dbReference>
<dbReference type="InterPro" id="IPR015240">
    <property type="entry name" value="tRNA_sdUridine_synth_fam1_C"/>
</dbReference>
<dbReference type="InterPro" id="IPR032819">
    <property type="entry name" value="TruB_C"/>
</dbReference>
<dbReference type="NCBIfam" id="TIGR00431">
    <property type="entry name" value="TruB"/>
    <property type="match status" value="1"/>
</dbReference>
<dbReference type="PANTHER" id="PTHR13767:SF2">
    <property type="entry name" value="PSEUDOURIDYLATE SYNTHASE TRUB1"/>
    <property type="match status" value="1"/>
</dbReference>
<dbReference type="PANTHER" id="PTHR13767">
    <property type="entry name" value="TRNA-PSEUDOURIDINE SYNTHASE"/>
    <property type="match status" value="1"/>
</dbReference>
<dbReference type="Pfam" id="PF09157">
    <property type="entry name" value="TruB-C_2"/>
    <property type="match status" value="1"/>
</dbReference>
<dbReference type="Pfam" id="PF16198">
    <property type="entry name" value="TruB_C_2"/>
    <property type="match status" value="1"/>
</dbReference>
<dbReference type="Pfam" id="PF01509">
    <property type="entry name" value="TruB_N"/>
    <property type="match status" value="1"/>
</dbReference>
<dbReference type="SUPFAM" id="SSF55120">
    <property type="entry name" value="Pseudouridine synthase"/>
    <property type="match status" value="1"/>
</dbReference>
<dbReference type="SUPFAM" id="SSF88697">
    <property type="entry name" value="PUA domain-like"/>
    <property type="match status" value="1"/>
</dbReference>
<evidence type="ECO:0000255" key="1">
    <source>
        <dbReference type="HAMAP-Rule" id="MF_01080"/>
    </source>
</evidence>
<accession>B0KHX6</accession>
<gene>
    <name evidence="1" type="primary">truB</name>
    <name type="ordered locus">PputGB1_4710</name>
</gene>
<protein>
    <recommendedName>
        <fullName evidence="1">tRNA pseudouridine synthase B</fullName>
        <ecNumber evidence="1">5.4.99.25</ecNumber>
    </recommendedName>
    <alternativeName>
        <fullName evidence="1">tRNA pseudouridine(55) synthase</fullName>
        <shortName evidence="1">Psi55 synthase</shortName>
    </alternativeName>
    <alternativeName>
        <fullName evidence="1">tRNA pseudouridylate synthase</fullName>
    </alternativeName>
    <alternativeName>
        <fullName evidence="1">tRNA-uridine isomerase</fullName>
    </alternativeName>
</protein>